<dbReference type="EMBL" id="AF187845">
    <property type="protein sequence ID" value="AAF87597.1"/>
    <property type="molecule type" value="mRNA"/>
</dbReference>
<dbReference type="EMBL" id="AF286592">
    <property type="protein sequence ID" value="AAG17723.1"/>
    <property type="molecule type" value="mRNA"/>
</dbReference>
<dbReference type="EMBL" id="AL590133">
    <property type="status" value="NOT_ANNOTATED_CDS"/>
    <property type="molecule type" value="Genomic_DNA"/>
</dbReference>
<dbReference type="EMBL" id="CH471121">
    <property type="protein sequence ID" value="EAW53477.1"/>
    <property type="molecule type" value="Genomic_DNA"/>
</dbReference>
<dbReference type="EMBL" id="CH471121">
    <property type="protein sequence ID" value="EAW53478.1"/>
    <property type="molecule type" value="Genomic_DNA"/>
</dbReference>
<dbReference type="EMBL" id="CH471121">
    <property type="protein sequence ID" value="EAW53479.1"/>
    <property type="molecule type" value="Genomic_DNA"/>
</dbReference>
<dbReference type="EMBL" id="BC012796">
    <property type="protein sequence ID" value="AAH12796.2"/>
    <property type="molecule type" value="mRNA"/>
</dbReference>
<dbReference type="EMBL" id="BC041604">
    <property type="protein sequence ID" value="AAH41604.1"/>
    <property type="molecule type" value="mRNA"/>
</dbReference>
<dbReference type="EMBL" id="AF286041">
    <property type="protein sequence ID" value="AAF97248.1"/>
    <property type="molecule type" value="mRNA"/>
</dbReference>
<dbReference type="CCDS" id="CCDS981.1">
    <molecule id="Q9NRR8-1"/>
</dbReference>
<dbReference type="RefSeq" id="NP_001033796.1">
    <molecule id="Q9NRR8-1"/>
    <property type="nucleotide sequence ID" value="NM_001038707.2"/>
</dbReference>
<dbReference type="RefSeq" id="NP_064624.1">
    <molecule id="Q9NRR8-1"/>
    <property type="nucleotide sequence ID" value="NM_020239.4"/>
</dbReference>
<dbReference type="RefSeq" id="XP_016857336.1">
    <molecule id="Q9NRR8-1"/>
    <property type="nucleotide sequence ID" value="XM_017001847.3"/>
</dbReference>
<dbReference type="RefSeq" id="XP_054193726.1">
    <molecule id="Q9NRR8-1"/>
    <property type="nucleotide sequence ID" value="XM_054337751.1"/>
</dbReference>
<dbReference type="BioGRID" id="121215">
    <property type="interactions" value="16"/>
</dbReference>
<dbReference type="FunCoup" id="Q9NRR8">
    <property type="interactions" value="102"/>
</dbReference>
<dbReference type="IntAct" id="Q9NRR8">
    <property type="interactions" value="6"/>
</dbReference>
<dbReference type="STRING" id="9606.ENSP00000475845"/>
<dbReference type="ChEMBL" id="CHEMBL3308925"/>
<dbReference type="GlyGen" id="Q9NRR8">
    <property type="glycosylation" value="1 site, 1 O-linked glycan (1 site)"/>
</dbReference>
<dbReference type="iPTMnet" id="Q9NRR8"/>
<dbReference type="PhosphoSitePlus" id="Q9NRR8"/>
<dbReference type="SwissPalm" id="Q9NRR8"/>
<dbReference type="BioMuta" id="CDC42SE1"/>
<dbReference type="DMDM" id="74752924"/>
<dbReference type="jPOST" id="Q9NRR8"/>
<dbReference type="MassIVE" id="Q9NRR8"/>
<dbReference type="PaxDb" id="9606-ENSP00000475845"/>
<dbReference type="PeptideAtlas" id="Q9NRR8"/>
<dbReference type="ProteomicsDB" id="82416">
    <molecule id="Q9NRR8-1"/>
</dbReference>
<dbReference type="ProteomicsDB" id="82417">
    <molecule id="Q9NRR8-2"/>
</dbReference>
<dbReference type="Pumba" id="Q9NRR8"/>
<dbReference type="Antibodypedia" id="34046">
    <property type="antibodies" value="10 antibodies from 9 providers"/>
</dbReference>
<dbReference type="DNASU" id="56882"/>
<dbReference type="Ensembl" id="ENST00000357235.6">
    <molecule id="Q9NRR8-1"/>
    <property type="protein sequence ID" value="ENSP00000349773.4"/>
    <property type="gene ID" value="ENSG00000197622.13"/>
</dbReference>
<dbReference type="Ensembl" id="ENST00000439374.6">
    <molecule id="Q9NRR8-1"/>
    <property type="protein sequence ID" value="ENSP00000475845.1"/>
    <property type="gene ID" value="ENSG00000197622.13"/>
</dbReference>
<dbReference type="Ensembl" id="ENST00000540998.5">
    <molecule id="Q9NRR8-1"/>
    <property type="protein sequence ID" value="ENSP00000445647.1"/>
    <property type="gene ID" value="ENSG00000197622.13"/>
</dbReference>
<dbReference type="GeneID" id="56882"/>
<dbReference type="KEGG" id="hsa:56882"/>
<dbReference type="MANE-Select" id="ENST00000357235.6">
    <property type="protein sequence ID" value="ENSP00000349773.4"/>
    <property type="RefSeq nucleotide sequence ID" value="NM_020239.4"/>
    <property type="RefSeq protein sequence ID" value="NP_064624.1"/>
</dbReference>
<dbReference type="UCSC" id="uc001ewo.4">
    <molecule id="Q9NRR8-1"/>
    <property type="organism name" value="human"/>
</dbReference>
<dbReference type="AGR" id="HGNC:17719"/>
<dbReference type="CTD" id="56882"/>
<dbReference type="DisGeNET" id="56882"/>
<dbReference type="GeneCards" id="CDC42SE1"/>
<dbReference type="HGNC" id="HGNC:17719">
    <property type="gene designation" value="CDC42SE1"/>
</dbReference>
<dbReference type="HPA" id="ENSG00000197622">
    <property type="expression patterns" value="Low tissue specificity"/>
</dbReference>
<dbReference type="MIM" id="619456">
    <property type="type" value="gene"/>
</dbReference>
<dbReference type="neXtProt" id="NX_Q9NRR8"/>
<dbReference type="OpenTargets" id="ENSG00000197622"/>
<dbReference type="PharmGKB" id="PA134875001"/>
<dbReference type="VEuPathDB" id="HostDB:ENSG00000197622"/>
<dbReference type="eggNOG" id="ENOG502S499">
    <property type="taxonomic scope" value="Eukaryota"/>
</dbReference>
<dbReference type="GeneTree" id="ENSGT00940000160112"/>
<dbReference type="HOGENOM" id="CLU_173417_1_0_1"/>
<dbReference type="InParanoid" id="Q9NRR8"/>
<dbReference type="OMA" id="DRPWNNS"/>
<dbReference type="OrthoDB" id="5559822at2759"/>
<dbReference type="PAN-GO" id="Q9NRR8">
    <property type="GO annotations" value="1 GO annotation based on evolutionary models"/>
</dbReference>
<dbReference type="PhylomeDB" id="Q9NRR8"/>
<dbReference type="TreeFam" id="TF323815"/>
<dbReference type="PathwayCommons" id="Q9NRR8"/>
<dbReference type="SignaLink" id="Q9NRR8"/>
<dbReference type="BioGRID-ORCS" id="56882">
    <property type="hits" value="68 hits in 1149 CRISPR screens"/>
</dbReference>
<dbReference type="ChiTaRS" id="CDC42SE1">
    <property type="organism name" value="human"/>
</dbReference>
<dbReference type="GenomeRNAi" id="56882"/>
<dbReference type="Pharos" id="Q9NRR8">
    <property type="development level" value="Tdark"/>
</dbReference>
<dbReference type="PRO" id="PR:Q9NRR8"/>
<dbReference type="Proteomes" id="UP000005640">
    <property type="component" value="Chromosome 1"/>
</dbReference>
<dbReference type="RNAct" id="Q9NRR8">
    <property type="molecule type" value="protein"/>
</dbReference>
<dbReference type="Bgee" id="ENSG00000197622">
    <property type="expression patterns" value="Expressed in granulocyte and 197 other cell types or tissues"/>
</dbReference>
<dbReference type="GO" id="GO:0030054">
    <property type="term" value="C:cell junction"/>
    <property type="evidence" value="ECO:0000314"/>
    <property type="project" value="HPA"/>
</dbReference>
<dbReference type="GO" id="GO:0005737">
    <property type="term" value="C:cytoplasm"/>
    <property type="evidence" value="ECO:0007669"/>
    <property type="project" value="UniProtKB-KW"/>
</dbReference>
<dbReference type="GO" id="GO:0005856">
    <property type="term" value="C:cytoskeleton"/>
    <property type="evidence" value="ECO:0007669"/>
    <property type="project" value="UniProtKB-SubCell"/>
</dbReference>
<dbReference type="GO" id="GO:0005886">
    <property type="term" value="C:plasma membrane"/>
    <property type="evidence" value="ECO:0000318"/>
    <property type="project" value="GO_Central"/>
</dbReference>
<dbReference type="GO" id="GO:0005095">
    <property type="term" value="F:GTPase inhibitor activity"/>
    <property type="evidence" value="ECO:0000304"/>
    <property type="project" value="ProtInc"/>
</dbReference>
<dbReference type="GO" id="GO:0031267">
    <property type="term" value="F:small GTPase binding"/>
    <property type="evidence" value="ECO:0007669"/>
    <property type="project" value="InterPro"/>
</dbReference>
<dbReference type="GO" id="GO:0006909">
    <property type="term" value="P:phagocytosis"/>
    <property type="evidence" value="ECO:0007669"/>
    <property type="project" value="UniProtKB-KW"/>
</dbReference>
<dbReference type="GO" id="GO:0008360">
    <property type="term" value="P:regulation of cell shape"/>
    <property type="evidence" value="ECO:0007669"/>
    <property type="project" value="UniProtKB-KW"/>
</dbReference>
<dbReference type="GO" id="GO:0035023">
    <property type="term" value="P:regulation of Rho protein signal transduction"/>
    <property type="evidence" value="ECO:0007669"/>
    <property type="project" value="InterPro"/>
</dbReference>
<dbReference type="GO" id="GO:0007165">
    <property type="term" value="P:signal transduction"/>
    <property type="evidence" value="ECO:0000304"/>
    <property type="project" value="ProtInc"/>
</dbReference>
<dbReference type="FunFam" id="3.90.810.10:FF:000015">
    <property type="entry name" value="CDC42 small effector protein 1"/>
    <property type="match status" value="1"/>
</dbReference>
<dbReference type="Gene3D" id="3.90.810.10">
    <property type="entry name" value="CRIB domain"/>
    <property type="match status" value="1"/>
</dbReference>
<dbReference type="InterPro" id="IPR000095">
    <property type="entry name" value="CRIB_dom"/>
</dbReference>
<dbReference type="InterPro" id="IPR036936">
    <property type="entry name" value="CRIB_dom_sf"/>
</dbReference>
<dbReference type="InterPro" id="IPR039056">
    <property type="entry name" value="SPEC"/>
</dbReference>
<dbReference type="PANTHER" id="PTHR13502:SF3">
    <property type="entry name" value="CDC42 SMALL EFFECTOR PROTEIN 1"/>
    <property type="match status" value="1"/>
</dbReference>
<dbReference type="PANTHER" id="PTHR13502">
    <property type="entry name" value="CDC42 SMALL EFFECTOR PROTEIN HOMOLOG"/>
    <property type="match status" value="1"/>
</dbReference>
<dbReference type="PROSITE" id="PS50108">
    <property type="entry name" value="CRIB"/>
    <property type="match status" value="1"/>
</dbReference>
<feature type="chain" id="PRO_0000334629" description="CDC42 small effector protein 1">
    <location>
        <begin position="1"/>
        <end position="79"/>
    </location>
</feature>
<feature type="domain" description="CRIB" evidence="1">
    <location>
        <begin position="30"/>
        <end position="43"/>
    </location>
</feature>
<feature type="region of interest" description="Mediates phosphoinositide-binding">
    <location>
        <begin position="19"/>
        <end position="24"/>
    </location>
</feature>
<feature type="region of interest" description="Disordered" evidence="2">
    <location>
        <begin position="48"/>
        <end position="79"/>
    </location>
</feature>
<feature type="compositionally biased region" description="Basic and acidic residues" evidence="2">
    <location>
        <begin position="63"/>
        <end position="72"/>
    </location>
</feature>
<feature type="lipid moiety-binding region" description="S-palmitoyl cysteine" evidence="8">
    <location>
        <position position="10"/>
    </location>
</feature>
<feature type="lipid moiety-binding region" description="S-palmitoyl cysteine" evidence="8">
    <location>
        <position position="11"/>
    </location>
</feature>
<feature type="splice variant" id="VSP_033717" description="In isoform 2." evidence="6">
    <original>KKKRRRIDRTMIGEPMNFVHLTHIGSGEMGAGDGLAMTGAVQEQMRSKGNRDRPWSNSRGL</original>
    <variation>VSLPTPHPNPKSSQLLCAVR</variation>
    <location>
        <begin position="19"/>
        <end position="79"/>
    </location>
</feature>
<feature type="mutagenesis site" description="Prevents targeting to the activated TCR." evidence="4">
    <original>CC</original>
    <variation>AA</variation>
    <location>
        <begin position="10"/>
        <end position="11"/>
    </location>
</feature>
<feature type="mutagenesis site" description="Abolishes interaction with CDC42, induces a decrease in blocking CDC42-induced JNK activation but does not affect targeting to the activated TCR; when associated with A-38 and A-41." evidence="3 4">
    <original>P</original>
    <variation>A</variation>
    <location>
        <position position="33"/>
    </location>
</feature>
<feature type="mutagenesis site" description="Abolishes interaction with CDC42, induces a decrease in blocking CDC42-induced JNK activation but does not affect targeting to the activated TCR; when associated with A-33 and A-41." evidence="3 4">
    <original>H</original>
    <variation>A</variation>
    <location>
        <position position="38"/>
    </location>
</feature>
<feature type="mutagenesis site" description="Abolishes interaction with CDC42, induces a decrease in blocking CDC42-induced JNK activation but does not affect targeting to the activated TCR; when associated with A-33 and A-38." evidence="3 4">
    <original>H</original>
    <variation>A</variation>
    <location>
        <position position="41"/>
    </location>
</feature>
<feature type="mutagenesis site" description="Abolishes interaction with CDC42 and induces a decrease in blocking CDC42-induced JNK activation; when associated with A-66." evidence="3">
    <original>Q</original>
    <variation>A</variation>
    <location>
        <position position="62"/>
    </location>
</feature>
<feature type="mutagenesis site" description="Abolishes interaction with CDC42 and induces a decrease in blocking CDC42-induced JNK activation; when associated with A-62." evidence="3">
    <original>K</original>
    <variation>A</variation>
    <location>
        <position position="66"/>
    </location>
</feature>
<sequence length="79" mass="8925">MSEFWHKLGCCVVEKPQPKKKRRRIDRTMIGEPMNFVHLTHIGSGEMGAGDGLAMTGAVQEQMRSKGNRDRPWSNSRGL</sequence>
<organism>
    <name type="scientific">Homo sapiens</name>
    <name type="common">Human</name>
    <dbReference type="NCBI Taxonomy" id="9606"/>
    <lineage>
        <taxon>Eukaryota</taxon>
        <taxon>Metazoa</taxon>
        <taxon>Chordata</taxon>
        <taxon>Craniata</taxon>
        <taxon>Vertebrata</taxon>
        <taxon>Euteleostomi</taxon>
        <taxon>Mammalia</taxon>
        <taxon>Eutheria</taxon>
        <taxon>Euarchontoglires</taxon>
        <taxon>Primates</taxon>
        <taxon>Haplorrhini</taxon>
        <taxon>Catarrhini</taxon>
        <taxon>Hominidae</taxon>
        <taxon>Homo</taxon>
    </lineage>
</organism>
<comment type="function">
    <text evidence="3 4 5">Probably involved in the organization of the actin cytoskeleton by acting downstream of CDC42, inducing actin filament assembly. Alters CDC42-induced cell shape changes. In activated T-cells, may play a role in CDC42-mediated F-actin accumulation at the immunological synapse. May play a role in early contractile events in phagocytosis in macrophages.</text>
</comment>
<comment type="subunit">
    <text evidence="3">Interacts with CDC42 (in GTP-bound form). Interacts weakly with RAC1 and not at all with RHOA.</text>
</comment>
<comment type="interaction">
    <interactant intactId="EBI-3438318">
        <id>Q9NRR8</id>
    </interactant>
    <interactant intactId="EBI-81752">
        <id>P60953</id>
        <label>CDC42</label>
    </interactant>
    <organismsDiffer>false</organismsDiffer>
    <experiments>3</experiments>
</comment>
<comment type="subcellular location">
    <subcellularLocation>
        <location>Cytoplasm</location>
        <location>Cytoskeleton</location>
    </subcellularLocation>
    <subcellularLocation>
        <location>Cell membrane</location>
        <topology>Lipid-anchor</topology>
    </subcellularLocation>
    <text>Recruited to the activated TCR prior actin polymerization.</text>
</comment>
<comment type="alternative products">
    <event type="alternative splicing"/>
    <isoform>
        <id>Q9NRR8-1</id>
        <name>1</name>
        <name>Alpha</name>
        <sequence type="displayed"/>
    </isoform>
    <isoform>
        <id>Q9NRR8-2</id>
        <name>2</name>
        <name>Beta</name>
        <sequence type="described" ref="VSP_033717"/>
    </isoform>
</comment>
<comment type="tissue specificity">
    <text evidence="4">Widely expressed. Expressed at higher level in T-lymphocytes, dendritic and whole blood cells.</text>
</comment>
<comment type="domain">
    <text>The CRIB domain mediates interaction with CDC42.</text>
</comment>
<comment type="similarity">
    <text evidence="7">Belongs to the CDC42SE/SPEC family.</text>
</comment>
<name>C42S1_HUMAN</name>
<evidence type="ECO:0000255" key="1">
    <source>
        <dbReference type="PROSITE-ProRule" id="PRU00057"/>
    </source>
</evidence>
<evidence type="ECO:0000256" key="2">
    <source>
        <dbReference type="SAM" id="MobiDB-lite"/>
    </source>
</evidence>
<evidence type="ECO:0000269" key="3">
    <source>
    </source>
</evidence>
<evidence type="ECO:0000269" key="4">
    <source>
    </source>
</evidence>
<evidence type="ECO:0000269" key="5">
    <source>
    </source>
</evidence>
<evidence type="ECO:0000303" key="6">
    <source>
    </source>
</evidence>
<evidence type="ECO:0000305" key="7"/>
<evidence type="ECO:0000305" key="8">
    <source>
    </source>
</evidence>
<accession>Q9NRR8</accession>
<accession>D3DV12</accession>
<accession>Q9HB17</accession>
<accession>Q9NQR2</accession>
<gene>
    <name type="primary">CDC42SE1</name>
    <name type="synonym">SPEC1</name>
</gene>
<protein>
    <recommendedName>
        <fullName>CDC42 small effector protein 1</fullName>
    </recommendedName>
    <alternativeName>
        <fullName>CDC42-binding protein SCIP1</fullName>
    </alternativeName>
    <alternativeName>
        <fullName>Small effector of CDC42 protein 1</fullName>
    </alternativeName>
</protein>
<reference key="1">
    <citation type="journal article" date="2000" name="J. Biol. Chem.">
        <title>SPECs, small binding proteins for Cdc42.</title>
        <authorList>
            <person name="Pirone D.M."/>
            <person name="Fukuhara S."/>
            <person name="Gutkind J.S."/>
            <person name="Burbelo P.D."/>
        </authorList>
    </citation>
    <scope>NUCLEOTIDE SEQUENCE [MRNA] (ISOFORM 1)</scope>
    <scope>FUNCTION</scope>
    <scope>SUBCELLULAR LOCATION</scope>
    <scope>INTERACTION WITH CDC42</scope>
    <scope>MUTAGENESIS OF PRO-33; HIS-38; HIS-41; GLN-62 AND LYS-66</scope>
</reference>
<reference key="2">
    <citation type="journal article" date="2001" name="Gene">
        <title>The genomic structure of the human SPEC1 gene reveals complex splicing and close promoter proximity to the AF1q translocation gene.</title>
        <authorList>
            <person name="Pirone D.M."/>
            <person name="Oberst M.D."/>
            <person name="Stylianou D."/>
            <person name="Burbelo P.D."/>
        </authorList>
    </citation>
    <scope>NUCLEOTIDE SEQUENCE [MRNA] (ISOFORM 2)</scope>
</reference>
<reference key="3">
    <citation type="journal article" date="2006" name="Nature">
        <title>The DNA sequence and biological annotation of human chromosome 1.</title>
        <authorList>
            <person name="Gregory S.G."/>
            <person name="Barlow K.F."/>
            <person name="McLay K.E."/>
            <person name="Kaul R."/>
            <person name="Swarbreck D."/>
            <person name="Dunham A."/>
            <person name="Scott C.E."/>
            <person name="Howe K.L."/>
            <person name="Woodfine K."/>
            <person name="Spencer C.C.A."/>
            <person name="Jones M.C."/>
            <person name="Gillson C."/>
            <person name="Searle S."/>
            <person name="Zhou Y."/>
            <person name="Kokocinski F."/>
            <person name="McDonald L."/>
            <person name="Evans R."/>
            <person name="Phillips K."/>
            <person name="Atkinson A."/>
            <person name="Cooper R."/>
            <person name="Jones C."/>
            <person name="Hall R.E."/>
            <person name="Andrews T.D."/>
            <person name="Lloyd C."/>
            <person name="Ainscough R."/>
            <person name="Almeida J.P."/>
            <person name="Ambrose K.D."/>
            <person name="Anderson F."/>
            <person name="Andrew R.W."/>
            <person name="Ashwell R.I.S."/>
            <person name="Aubin K."/>
            <person name="Babbage A.K."/>
            <person name="Bagguley C.L."/>
            <person name="Bailey J."/>
            <person name="Beasley H."/>
            <person name="Bethel G."/>
            <person name="Bird C.P."/>
            <person name="Bray-Allen S."/>
            <person name="Brown J.Y."/>
            <person name="Brown A.J."/>
            <person name="Buckley D."/>
            <person name="Burton J."/>
            <person name="Bye J."/>
            <person name="Carder C."/>
            <person name="Chapman J.C."/>
            <person name="Clark S.Y."/>
            <person name="Clarke G."/>
            <person name="Clee C."/>
            <person name="Cobley V."/>
            <person name="Collier R.E."/>
            <person name="Corby N."/>
            <person name="Coville G.J."/>
            <person name="Davies J."/>
            <person name="Deadman R."/>
            <person name="Dunn M."/>
            <person name="Earthrowl M."/>
            <person name="Ellington A.G."/>
            <person name="Errington H."/>
            <person name="Frankish A."/>
            <person name="Frankland J."/>
            <person name="French L."/>
            <person name="Garner P."/>
            <person name="Garnett J."/>
            <person name="Gay L."/>
            <person name="Ghori M.R.J."/>
            <person name="Gibson R."/>
            <person name="Gilby L.M."/>
            <person name="Gillett W."/>
            <person name="Glithero R.J."/>
            <person name="Grafham D.V."/>
            <person name="Griffiths C."/>
            <person name="Griffiths-Jones S."/>
            <person name="Grocock R."/>
            <person name="Hammond S."/>
            <person name="Harrison E.S.I."/>
            <person name="Hart E."/>
            <person name="Haugen E."/>
            <person name="Heath P.D."/>
            <person name="Holmes S."/>
            <person name="Holt K."/>
            <person name="Howden P.J."/>
            <person name="Hunt A.R."/>
            <person name="Hunt S.E."/>
            <person name="Hunter G."/>
            <person name="Isherwood J."/>
            <person name="James R."/>
            <person name="Johnson C."/>
            <person name="Johnson D."/>
            <person name="Joy A."/>
            <person name="Kay M."/>
            <person name="Kershaw J.K."/>
            <person name="Kibukawa M."/>
            <person name="Kimberley A.M."/>
            <person name="King A."/>
            <person name="Knights A.J."/>
            <person name="Lad H."/>
            <person name="Laird G."/>
            <person name="Lawlor S."/>
            <person name="Leongamornlert D.A."/>
            <person name="Lloyd D.M."/>
            <person name="Loveland J."/>
            <person name="Lovell J."/>
            <person name="Lush M.J."/>
            <person name="Lyne R."/>
            <person name="Martin S."/>
            <person name="Mashreghi-Mohammadi M."/>
            <person name="Matthews L."/>
            <person name="Matthews N.S.W."/>
            <person name="McLaren S."/>
            <person name="Milne S."/>
            <person name="Mistry S."/>
            <person name="Moore M.J.F."/>
            <person name="Nickerson T."/>
            <person name="O'Dell C.N."/>
            <person name="Oliver K."/>
            <person name="Palmeiri A."/>
            <person name="Palmer S.A."/>
            <person name="Parker A."/>
            <person name="Patel D."/>
            <person name="Pearce A.V."/>
            <person name="Peck A.I."/>
            <person name="Pelan S."/>
            <person name="Phelps K."/>
            <person name="Phillimore B.J."/>
            <person name="Plumb R."/>
            <person name="Rajan J."/>
            <person name="Raymond C."/>
            <person name="Rouse G."/>
            <person name="Saenphimmachak C."/>
            <person name="Sehra H.K."/>
            <person name="Sheridan E."/>
            <person name="Shownkeen R."/>
            <person name="Sims S."/>
            <person name="Skuce C.D."/>
            <person name="Smith M."/>
            <person name="Steward C."/>
            <person name="Subramanian S."/>
            <person name="Sycamore N."/>
            <person name="Tracey A."/>
            <person name="Tromans A."/>
            <person name="Van Helmond Z."/>
            <person name="Wall M."/>
            <person name="Wallis J.M."/>
            <person name="White S."/>
            <person name="Whitehead S.L."/>
            <person name="Wilkinson J.E."/>
            <person name="Willey D.L."/>
            <person name="Williams H."/>
            <person name="Wilming L."/>
            <person name="Wray P.W."/>
            <person name="Wu Z."/>
            <person name="Coulson A."/>
            <person name="Vaudin M."/>
            <person name="Sulston J.E."/>
            <person name="Durbin R.M."/>
            <person name="Hubbard T."/>
            <person name="Wooster R."/>
            <person name="Dunham I."/>
            <person name="Carter N.P."/>
            <person name="McVean G."/>
            <person name="Ross M.T."/>
            <person name="Harrow J."/>
            <person name="Olson M.V."/>
            <person name="Beck S."/>
            <person name="Rogers J."/>
            <person name="Bentley D.R."/>
        </authorList>
    </citation>
    <scope>NUCLEOTIDE SEQUENCE [LARGE SCALE GENOMIC DNA]</scope>
</reference>
<reference key="4">
    <citation type="submission" date="2005-09" db="EMBL/GenBank/DDBJ databases">
        <authorList>
            <person name="Mural R.J."/>
            <person name="Istrail S."/>
            <person name="Sutton G.G."/>
            <person name="Florea L."/>
            <person name="Halpern A.L."/>
            <person name="Mobarry C.M."/>
            <person name="Lippert R."/>
            <person name="Walenz B."/>
            <person name="Shatkay H."/>
            <person name="Dew I."/>
            <person name="Miller J.R."/>
            <person name="Flanigan M.J."/>
            <person name="Edwards N.J."/>
            <person name="Bolanos R."/>
            <person name="Fasulo D."/>
            <person name="Halldorsson B.V."/>
            <person name="Hannenhalli S."/>
            <person name="Turner R."/>
            <person name="Yooseph S."/>
            <person name="Lu F."/>
            <person name="Nusskern D.R."/>
            <person name="Shue B.C."/>
            <person name="Zheng X.H."/>
            <person name="Zhong F."/>
            <person name="Delcher A.L."/>
            <person name="Huson D.H."/>
            <person name="Kravitz S.A."/>
            <person name="Mouchard L."/>
            <person name="Reinert K."/>
            <person name="Remington K.A."/>
            <person name="Clark A.G."/>
            <person name="Waterman M.S."/>
            <person name="Eichler E.E."/>
            <person name="Adams M.D."/>
            <person name="Hunkapiller M.W."/>
            <person name="Myers E.W."/>
            <person name="Venter J.C."/>
        </authorList>
    </citation>
    <scope>NUCLEOTIDE SEQUENCE [LARGE SCALE GENOMIC DNA]</scope>
</reference>
<reference key="5">
    <citation type="journal article" date="2004" name="Genome Res.">
        <title>The status, quality, and expansion of the NIH full-length cDNA project: the Mammalian Gene Collection (MGC).</title>
        <authorList>
            <consortium name="The MGC Project Team"/>
        </authorList>
    </citation>
    <scope>NUCLEOTIDE SEQUENCE [LARGE SCALE MRNA] (ISOFORM 1)</scope>
    <source>
        <tissue>Skin</tissue>
    </source>
</reference>
<reference key="6">
    <citation type="submission" date="2000-07" db="EMBL/GenBank/DDBJ databases">
        <title>Cloning and characterization of a small, CRIB-containing, Cdc42-binding protein.</title>
        <authorList>
            <person name="Mitina O.V."/>
            <person name="Serebriiskii I.G."/>
            <person name="Chernoff J."/>
        </authorList>
    </citation>
    <scope>NUCLEOTIDE SEQUENCE [MRNA] OF 3-79 (ISOFORM 1)</scope>
</reference>
<reference key="7">
    <citation type="journal article" date="2005" name="J. Biol. Chem.">
        <title>The role of SPECs, small Cdc42-binding proteins, in F-actin accumulation at the immunological synapse.</title>
        <authorList>
            <person name="Ching K.H."/>
            <person name="Kisailus A.E."/>
            <person name="Burbelo P.D."/>
        </authorList>
    </citation>
    <scope>FUNCTION</scope>
    <scope>SUBCELLULAR LOCATION</scope>
    <scope>TISSUE SPECIFICITY</scope>
    <scope>PALMITOYLATION AT CYS-10 AND CYS-11</scope>
    <scope>MUTAGENESIS OF 10-CYS-CYS-11; PRO-33; HIS-38 AND HIS-41</scope>
</reference>
<reference key="8">
    <citation type="journal article" date="2007" name="Exp. Cell Res.">
        <title>Biochemical characterization of distinct regions of SPEC molecules and their role in phagocytosis.</title>
        <authorList>
            <person name="Ching K.H."/>
            <person name="Kisailus A.E."/>
            <person name="Burbelo P.D."/>
        </authorList>
    </citation>
    <scope>FUNCTION</scope>
    <scope>PHOSPHOINOSITIDE-BINDING</scope>
</reference>
<proteinExistence type="evidence at protein level"/>
<keyword id="KW-0025">Alternative splicing</keyword>
<keyword id="KW-1003">Cell membrane</keyword>
<keyword id="KW-0133">Cell shape</keyword>
<keyword id="KW-0963">Cytoplasm</keyword>
<keyword id="KW-0206">Cytoskeleton</keyword>
<keyword id="KW-0449">Lipoprotein</keyword>
<keyword id="KW-0472">Membrane</keyword>
<keyword id="KW-0564">Palmitate</keyword>
<keyword id="KW-0581">Phagocytosis</keyword>
<keyword id="KW-1267">Proteomics identification</keyword>
<keyword id="KW-1185">Reference proteome</keyword>